<name>XPT_FINM2</name>
<sequence>MRKLEERIMKDGLVLPGNILKVDRFINHMIDPVLFEDLANEFYEKFKDKKINKILTIEVSGIAIAYACGIRFNCPVVFAKKTSSKTLGDNCYRTEVFSFTKNRSYEVMVSKEYLDEKDHVLLIDDFLANGKALEGLIDICSQANATVEGIGILIEKVFQKGGENLRRQGYTIESLARIKGFTDDSVIFED</sequence>
<proteinExistence type="inferred from homology"/>
<feature type="chain" id="PRO_0000339699" description="Xanthine phosphoribosyltransferase">
    <location>
        <begin position="1"/>
        <end position="190"/>
    </location>
</feature>
<feature type="binding site" evidence="1">
    <location>
        <position position="20"/>
    </location>
    <ligand>
        <name>xanthine</name>
        <dbReference type="ChEBI" id="CHEBI:17712"/>
    </ligand>
</feature>
<feature type="binding site" evidence="1">
    <location>
        <position position="27"/>
    </location>
    <ligand>
        <name>xanthine</name>
        <dbReference type="ChEBI" id="CHEBI:17712"/>
    </ligand>
</feature>
<feature type="binding site" evidence="1">
    <location>
        <begin position="128"/>
        <end position="132"/>
    </location>
    <ligand>
        <name>5-phospho-alpha-D-ribose 1-diphosphate</name>
        <dbReference type="ChEBI" id="CHEBI:58017"/>
    </ligand>
</feature>
<feature type="binding site" evidence="1">
    <location>
        <position position="156"/>
    </location>
    <ligand>
        <name>xanthine</name>
        <dbReference type="ChEBI" id="CHEBI:17712"/>
    </ligand>
</feature>
<reference key="1">
    <citation type="journal article" date="2008" name="DNA Res.">
        <title>Complete genome sequence of Finegoldia magna, an anaerobic opportunistic pathogen.</title>
        <authorList>
            <person name="Goto T."/>
            <person name="Yamashita A."/>
            <person name="Hirakawa H."/>
            <person name="Matsutani M."/>
            <person name="Todo K."/>
            <person name="Ohshima K."/>
            <person name="Toh H."/>
            <person name="Miyamoto K."/>
            <person name="Kuhara S."/>
            <person name="Hattori M."/>
            <person name="Shimizu T."/>
            <person name="Akimoto S."/>
        </authorList>
    </citation>
    <scope>NUCLEOTIDE SEQUENCE [LARGE SCALE GENOMIC DNA]</scope>
    <source>
        <strain>ATCC 29328 / DSM 20472 / WAL 2508</strain>
    </source>
</reference>
<gene>
    <name evidence="1" type="primary">xpt</name>
    <name type="ordered locus">FMG_1031</name>
</gene>
<protein>
    <recommendedName>
        <fullName evidence="1">Xanthine phosphoribosyltransferase</fullName>
        <shortName evidence="1">XPRTase</shortName>
        <ecNumber evidence="1">2.4.2.22</ecNumber>
    </recommendedName>
</protein>
<keyword id="KW-0963">Cytoplasm</keyword>
<keyword id="KW-0328">Glycosyltransferase</keyword>
<keyword id="KW-0660">Purine salvage</keyword>
<keyword id="KW-1185">Reference proteome</keyword>
<keyword id="KW-0808">Transferase</keyword>
<accession>B0S259</accession>
<organism>
    <name type="scientific">Finegoldia magna (strain ATCC 29328 / DSM 20472 / WAL 2508)</name>
    <name type="common">Peptostreptococcus magnus</name>
    <dbReference type="NCBI Taxonomy" id="334413"/>
    <lineage>
        <taxon>Bacteria</taxon>
        <taxon>Bacillati</taxon>
        <taxon>Bacillota</taxon>
        <taxon>Tissierellia</taxon>
        <taxon>Tissierellales</taxon>
        <taxon>Peptoniphilaceae</taxon>
        <taxon>Finegoldia</taxon>
    </lineage>
</organism>
<evidence type="ECO:0000255" key="1">
    <source>
        <dbReference type="HAMAP-Rule" id="MF_01184"/>
    </source>
</evidence>
<comment type="function">
    <text evidence="1">Converts the preformed base xanthine, a product of nucleic acid breakdown, to xanthosine 5'-monophosphate (XMP), so it can be reused for RNA or DNA synthesis.</text>
</comment>
<comment type="catalytic activity">
    <reaction evidence="1">
        <text>XMP + diphosphate = xanthine + 5-phospho-alpha-D-ribose 1-diphosphate</text>
        <dbReference type="Rhea" id="RHEA:10800"/>
        <dbReference type="ChEBI" id="CHEBI:17712"/>
        <dbReference type="ChEBI" id="CHEBI:33019"/>
        <dbReference type="ChEBI" id="CHEBI:57464"/>
        <dbReference type="ChEBI" id="CHEBI:58017"/>
        <dbReference type="EC" id="2.4.2.22"/>
    </reaction>
</comment>
<comment type="pathway">
    <text evidence="1">Purine metabolism; XMP biosynthesis via salvage pathway; XMP from xanthine: step 1/1.</text>
</comment>
<comment type="subunit">
    <text evidence="1">Homodimer.</text>
</comment>
<comment type="subcellular location">
    <subcellularLocation>
        <location evidence="1">Cytoplasm</location>
    </subcellularLocation>
</comment>
<comment type="similarity">
    <text evidence="1">Belongs to the purine/pyrimidine phosphoribosyltransferase family. Xpt subfamily.</text>
</comment>
<dbReference type="EC" id="2.4.2.22" evidence="1"/>
<dbReference type="EMBL" id="AP008971">
    <property type="protein sequence ID" value="BAG08449.1"/>
    <property type="molecule type" value="Genomic_DNA"/>
</dbReference>
<dbReference type="RefSeq" id="WP_002842196.1">
    <property type="nucleotide sequence ID" value="NC_010376.1"/>
</dbReference>
<dbReference type="SMR" id="B0S259"/>
<dbReference type="STRING" id="334413.FMG_1031"/>
<dbReference type="KEGG" id="fma:FMG_1031"/>
<dbReference type="eggNOG" id="COG0503">
    <property type="taxonomic scope" value="Bacteria"/>
</dbReference>
<dbReference type="HOGENOM" id="CLU_099015_0_0_9"/>
<dbReference type="UniPathway" id="UPA00602">
    <property type="reaction ID" value="UER00658"/>
</dbReference>
<dbReference type="Proteomes" id="UP000001319">
    <property type="component" value="Chromosome"/>
</dbReference>
<dbReference type="GO" id="GO:0005737">
    <property type="term" value="C:cytoplasm"/>
    <property type="evidence" value="ECO:0007669"/>
    <property type="project" value="UniProtKB-SubCell"/>
</dbReference>
<dbReference type="GO" id="GO:0000310">
    <property type="term" value="F:xanthine phosphoribosyltransferase activity"/>
    <property type="evidence" value="ECO:0007669"/>
    <property type="project" value="UniProtKB-UniRule"/>
</dbReference>
<dbReference type="GO" id="GO:0006166">
    <property type="term" value="P:purine ribonucleoside salvage"/>
    <property type="evidence" value="ECO:0007669"/>
    <property type="project" value="UniProtKB-KW"/>
</dbReference>
<dbReference type="GO" id="GO:0046110">
    <property type="term" value="P:xanthine metabolic process"/>
    <property type="evidence" value="ECO:0007669"/>
    <property type="project" value="InterPro"/>
</dbReference>
<dbReference type="GO" id="GO:0032265">
    <property type="term" value="P:XMP salvage"/>
    <property type="evidence" value="ECO:0007669"/>
    <property type="project" value="UniProtKB-UniRule"/>
</dbReference>
<dbReference type="CDD" id="cd06223">
    <property type="entry name" value="PRTases_typeI"/>
    <property type="match status" value="1"/>
</dbReference>
<dbReference type="Gene3D" id="3.40.50.2020">
    <property type="match status" value="1"/>
</dbReference>
<dbReference type="HAMAP" id="MF_01184">
    <property type="entry name" value="XPRTase"/>
    <property type="match status" value="1"/>
</dbReference>
<dbReference type="InterPro" id="IPR000836">
    <property type="entry name" value="PRibTrfase_dom"/>
</dbReference>
<dbReference type="InterPro" id="IPR029057">
    <property type="entry name" value="PRTase-like"/>
</dbReference>
<dbReference type="InterPro" id="IPR050118">
    <property type="entry name" value="Pur/Pyrimidine_PRTase"/>
</dbReference>
<dbReference type="InterPro" id="IPR010079">
    <property type="entry name" value="Xanthine_PRibTrfase"/>
</dbReference>
<dbReference type="NCBIfam" id="NF006671">
    <property type="entry name" value="PRK09219.1"/>
    <property type="match status" value="1"/>
</dbReference>
<dbReference type="NCBIfam" id="TIGR01744">
    <property type="entry name" value="XPRTase"/>
    <property type="match status" value="1"/>
</dbReference>
<dbReference type="PANTHER" id="PTHR43864">
    <property type="entry name" value="HYPOXANTHINE/GUANINE PHOSPHORIBOSYLTRANSFERASE"/>
    <property type="match status" value="1"/>
</dbReference>
<dbReference type="PANTHER" id="PTHR43864:SF1">
    <property type="entry name" value="XANTHINE PHOSPHORIBOSYLTRANSFERASE"/>
    <property type="match status" value="1"/>
</dbReference>
<dbReference type="Pfam" id="PF00156">
    <property type="entry name" value="Pribosyltran"/>
    <property type="match status" value="1"/>
</dbReference>
<dbReference type="SUPFAM" id="SSF53271">
    <property type="entry name" value="PRTase-like"/>
    <property type="match status" value="1"/>
</dbReference>